<gene>
    <name type="primary">apaG</name>
    <name type="synonym">corD</name>
    <name type="ordered locus">STY0104</name>
    <name type="ordered locus">t0092</name>
</gene>
<protein>
    <recommendedName>
        <fullName>Protein ApaG</fullName>
    </recommendedName>
    <alternativeName>
        <fullName>Protein CorD</fullName>
    </alternativeName>
</protein>
<dbReference type="EMBL" id="AL513382">
    <property type="protein sequence ID" value="CAD01245.1"/>
    <property type="molecule type" value="Genomic_DNA"/>
</dbReference>
<dbReference type="EMBL" id="AE014613">
    <property type="protein sequence ID" value="AAO67825.1"/>
    <property type="molecule type" value="Genomic_DNA"/>
</dbReference>
<dbReference type="RefSeq" id="NP_454701.1">
    <property type="nucleotide sequence ID" value="NC_003198.1"/>
</dbReference>
<dbReference type="RefSeq" id="WP_000610896.1">
    <property type="nucleotide sequence ID" value="NZ_WSUR01000028.1"/>
</dbReference>
<dbReference type="SMR" id="Q8Z9J8"/>
<dbReference type="STRING" id="220341.gene:17584147"/>
<dbReference type="KEGG" id="stt:t0092"/>
<dbReference type="KEGG" id="sty:STY0104"/>
<dbReference type="PATRIC" id="fig|220341.7.peg.103"/>
<dbReference type="eggNOG" id="COG2967">
    <property type="taxonomic scope" value="Bacteria"/>
</dbReference>
<dbReference type="HOGENOM" id="CLU_128074_0_0_6"/>
<dbReference type="OMA" id="MRGEYFC"/>
<dbReference type="OrthoDB" id="9795226at2"/>
<dbReference type="Proteomes" id="UP000000541">
    <property type="component" value="Chromosome"/>
</dbReference>
<dbReference type="Proteomes" id="UP000002670">
    <property type="component" value="Chromosome"/>
</dbReference>
<dbReference type="GO" id="GO:0070987">
    <property type="term" value="P:error-free translesion synthesis"/>
    <property type="evidence" value="ECO:0007669"/>
    <property type="project" value="TreeGrafter"/>
</dbReference>
<dbReference type="Gene3D" id="2.60.40.1470">
    <property type="entry name" value="ApaG domain"/>
    <property type="match status" value="1"/>
</dbReference>
<dbReference type="HAMAP" id="MF_00791">
    <property type="entry name" value="ApaG"/>
    <property type="match status" value="1"/>
</dbReference>
<dbReference type="InterPro" id="IPR007474">
    <property type="entry name" value="ApaG_domain"/>
</dbReference>
<dbReference type="InterPro" id="IPR036767">
    <property type="entry name" value="ApaG_sf"/>
</dbReference>
<dbReference type="InterPro" id="IPR023065">
    <property type="entry name" value="Uncharacterised_ApaG"/>
</dbReference>
<dbReference type="NCBIfam" id="NF003967">
    <property type="entry name" value="PRK05461.1"/>
    <property type="match status" value="1"/>
</dbReference>
<dbReference type="PANTHER" id="PTHR14289">
    <property type="entry name" value="F-BOX ONLY PROTEIN 3"/>
    <property type="match status" value="1"/>
</dbReference>
<dbReference type="PANTHER" id="PTHR14289:SF16">
    <property type="entry name" value="POLYMERASE DELTA-INTERACTING PROTEIN 2"/>
    <property type="match status" value="1"/>
</dbReference>
<dbReference type="Pfam" id="PF04379">
    <property type="entry name" value="DUF525"/>
    <property type="match status" value="1"/>
</dbReference>
<dbReference type="SUPFAM" id="SSF110069">
    <property type="entry name" value="ApaG-like"/>
    <property type="match status" value="1"/>
</dbReference>
<dbReference type="PROSITE" id="PS51087">
    <property type="entry name" value="APAG"/>
    <property type="match status" value="1"/>
</dbReference>
<accession>Q8Z9J8</accession>
<accession>Q7CBV3</accession>
<feature type="chain" id="PRO_0000197961" description="Protein ApaG">
    <location>
        <begin position="1"/>
        <end position="125"/>
    </location>
</feature>
<feature type="domain" description="ApaG">
    <location>
        <begin position="1"/>
        <end position="125"/>
    </location>
</feature>
<name>APAG_SALTI</name>
<sequence>MINSPRVCIQVQSVYIEAQSSPDDERYVFAYTVTIRNLGRAPVQLLGRYWLITNGHGRETEVQGKGVVGVQPRIAPGEEYQYTGGAVIETPLGTMQGHYEMIDENGDAFTIDIPVFRLAVPTLIH</sequence>
<organism>
    <name type="scientific">Salmonella typhi</name>
    <dbReference type="NCBI Taxonomy" id="90370"/>
    <lineage>
        <taxon>Bacteria</taxon>
        <taxon>Pseudomonadati</taxon>
        <taxon>Pseudomonadota</taxon>
        <taxon>Gammaproteobacteria</taxon>
        <taxon>Enterobacterales</taxon>
        <taxon>Enterobacteriaceae</taxon>
        <taxon>Salmonella</taxon>
    </lineage>
</organism>
<reference key="1">
    <citation type="journal article" date="2001" name="Nature">
        <title>Complete genome sequence of a multiple drug resistant Salmonella enterica serovar Typhi CT18.</title>
        <authorList>
            <person name="Parkhill J."/>
            <person name="Dougan G."/>
            <person name="James K.D."/>
            <person name="Thomson N.R."/>
            <person name="Pickard D."/>
            <person name="Wain J."/>
            <person name="Churcher C.M."/>
            <person name="Mungall K.L."/>
            <person name="Bentley S.D."/>
            <person name="Holden M.T.G."/>
            <person name="Sebaihia M."/>
            <person name="Baker S."/>
            <person name="Basham D."/>
            <person name="Brooks K."/>
            <person name="Chillingworth T."/>
            <person name="Connerton P."/>
            <person name="Cronin A."/>
            <person name="Davis P."/>
            <person name="Davies R.M."/>
            <person name="Dowd L."/>
            <person name="White N."/>
            <person name="Farrar J."/>
            <person name="Feltwell T."/>
            <person name="Hamlin N."/>
            <person name="Haque A."/>
            <person name="Hien T.T."/>
            <person name="Holroyd S."/>
            <person name="Jagels K."/>
            <person name="Krogh A."/>
            <person name="Larsen T.S."/>
            <person name="Leather S."/>
            <person name="Moule S."/>
            <person name="O'Gaora P."/>
            <person name="Parry C."/>
            <person name="Quail M.A."/>
            <person name="Rutherford K.M."/>
            <person name="Simmonds M."/>
            <person name="Skelton J."/>
            <person name="Stevens K."/>
            <person name="Whitehead S."/>
            <person name="Barrell B.G."/>
        </authorList>
    </citation>
    <scope>NUCLEOTIDE SEQUENCE [LARGE SCALE GENOMIC DNA]</scope>
    <source>
        <strain>CT18</strain>
    </source>
</reference>
<reference key="2">
    <citation type="journal article" date="2003" name="J. Bacteriol.">
        <title>Comparative genomics of Salmonella enterica serovar Typhi strains Ty2 and CT18.</title>
        <authorList>
            <person name="Deng W."/>
            <person name="Liou S.-R."/>
            <person name="Plunkett G. III"/>
            <person name="Mayhew G.F."/>
            <person name="Rose D.J."/>
            <person name="Burland V."/>
            <person name="Kodoyianni V."/>
            <person name="Schwartz D.C."/>
            <person name="Blattner F.R."/>
        </authorList>
    </citation>
    <scope>NUCLEOTIDE SEQUENCE [LARGE SCALE GENOMIC DNA]</scope>
    <source>
        <strain>ATCC 700931 / Ty2</strain>
    </source>
</reference>
<proteinExistence type="inferred from homology"/>